<keyword id="KW-0007">Acetylation</keyword>
<keyword id="KW-0963">Cytoplasm</keyword>
<keyword id="KW-1267">Proteomics identification</keyword>
<keyword id="KW-1185">Reference proteome</keyword>
<gene>
    <name type="primary">NIPSNAP3A</name>
    <name type="synonym">NIPSNAP4</name>
    <name type="ORF">HSPC299</name>
</gene>
<protein>
    <recommendedName>
        <fullName>Protein NipSnap homolog 3A</fullName>
        <shortName>NipSnap3A</shortName>
    </recommendedName>
    <alternativeName>
        <fullName>Protein NipSnap homolog 4</fullName>
        <shortName>NipSnap4</shortName>
    </alternativeName>
    <alternativeName>
        <fullName>Target for Salmonella secreted protein C</fullName>
        <shortName>TassC</shortName>
    </alternativeName>
</protein>
<dbReference type="EMBL" id="AK024015">
    <property type="protein sequence ID" value="BAB14777.1"/>
    <property type="molecule type" value="mRNA"/>
</dbReference>
<dbReference type="EMBL" id="AL117557">
    <property type="protein sequence ID" value="CAB55992.2"/>
    <property type="molecule type" value="mRNA"/>
</dbReference>
<dbReference type="EMBL" id="AF161417">
    <property type="protein sequence ID" value="AAF28977.1"/>
    <property type="status" value="ALT_INIT"/>
    <property type="molecule type" value="mRNA"/>
</dbReference>
<dbReference type="EMBL" id="AL359846">
    <property type="status" value="NOT_ANNOTATED_CDS"/>
    <property type="molecule type" value="Genomic_DNA"/>
</dbReference>
<dbReference type="EMBL" id="CH471105">
    <property type="protein sequence ID" value="EAW58990.1"/>
    <property type="molecule type" value="Genomic_DNA"/>
</dbReference>
<dbReference type="EMBL" id="BC005935">
    <property type="protein sequence ID" value="AAH05935.1"/>
    <property type="molecule type" value="mRNA"/>
</dbReference>
<dbReference type="CCDS" id="CCDS6760.1"/>
<dbReference type="RefSeq" id="NP_001316499.1">
    <property type="nucleotide sequence ID" value="NM_001329570.1"/>
</dbReference>
<dbReference type="RefSeq" id="NP_056284.1">
    <property type="nucleotide sequence ID" value="NM_015469.3"/>
</dbReference>
<dbReference type="SMR" id="Q9UFN0"/>
<dbReference type="BioGRID" id="117432">
    <property type="interactions" value="97"/>
</dbReference>
<dbReference type="FunCoup" id="Q9UFN0">
    <property type="interactions" value="2001"/>
</dbReference>
<dbReference type="IntAct" id="Q9UFN0">
    <property type="interactions" value="80"/>
</dbReference>
<dbReference type="MINT" id="Q9UFN0"/>
<dbReference type="STRING" id="9606.ENSP00000363899"/>
<dbReference type="ChEMBL" id="CHEMBL3817722"/>
<dbReference type="iPTMnet" id="Q9UFN0"/>
<dbReference type="MetOSite" id="Q9UFN0"/>
<dbReference type="PhosphoSitePlus" id="Q9UFN0"/>
<dbReference type="SwissPalm" id="Q9UFN0"/>
<dbReference type="BioMuta" id="NIPSNAP3A"/>
<dbReference type="DMDM" id="18203499"/>
<dbReference type="OGP" id="Q9UFN0"/>
<dbReference type="jPOST" id="Q9UFN0"/>
<dbReference type="MassIVE" id="Q9UFN0"/>
<dbReference type="PaxDb" id="9606-ENSP00000363899"/>
<dbReference type="PeptideAtlas" id="Q9UFN0"/>
<dbReference type="ProteomicsDB" id="84191"/>
<dbReference type="Pumba" id="Q9UFN0"/>
<dbReference type="Antibodypedia" id="29247">
    <property type="antibodies" value="115 antibodies from 28 providers"/>
</dbReference>
<dbReference type="DNASU" id="25934"/>
<dbReference type="Ensembl" id="ENST00000374767.5">
    <property type="protein sequence ID" value="ENSP00000363899.4"/>
    <property type="gene ID" value="ENSG00000136783.10"/>
</dbReference>
<dbReference type="GeneID" id="25934"/>
<dbReference type="KEGG" id="hsa:25934"/>
<dbReference type="MANE-Select" id="ENST00000374767.5">
    <property type="protein sequence ID" value="ENSP00000363899.4"/>
    <property type="RefSeq nucleotide sequence ID" value="NM_015469.3"/>
    <property type="RefSeq protein sequence ID" value="NP_056284.1"/>
</dbReference>
<dbReference type="UCSC" id="uc004bch.1">
    <property type="organism name" value="human"/>
</dbReference>
<dbReference type="AGR" id="HGNC:23619"/>
<dbReference type="CTD" id="25934"/>
<dbReference type="DisGeNET" id="25934"/>
<dbReference type="GeneCards" id="NIPSNAP3A"/>
<dbReference type="HGNC" id="HGNC:23619">
    <property type="gene designation" value="NIPSNAP3A"/>
</dbReference>
<dbReference type="HPA" id="ENSG00000136783">
    <property type="expression patterns" value="Low tissue specificity"/>
</dbReference>
<dbReference type="MIM" id="608871">
    <property type="type" value="gene"/>
</dbReference>
<dbReference type="neXtProt" id="NX_Q9UFN0"/>
<dbReference type="OpenTargets" id="ENSG00000136783"/>
<dbReference type="PharmGKB" id="PA134954501"/>
<dbReference type="VEuPathDB" id="HostDB:ENSG00000136783"/>
<dbReference type="eggNOG" id="KOG2883">
    <property type="taxonomic scope" value="Eukaryota"/>
</dbReference>
<dbReference type="GeneTree" id="ENSGT00950000183018"/>
<dbReference type="HOGENOM" id="CLU_085919_0_1_1"/>
<dbReference type="InParanoid" id="Q9UFN0"/>
<dbReference type="OMA" id="AVHAHIN"/>
<dbReference type="OrthoDB" id="10262843at2759"/>
<dbReference type="PAN-GO" id="Q9UFN0">
    <property type="GO annotations" value="1 GO annotation based on evolutionary models"/>
</dbReference>
<dbReference type="PhylomeDB" id="Q9UFN0"/>
<dbReference type="TreeFam" id="TF314501"/>
<dbReference type="PathwayCommons" id="Q9UFN0"/>
<dbReference type="SignaLink" id="Q9UFN0"/>
<dbReference type="BioGRID-ORCS" id="25934">
    <property type="hits" value="6 hits in 1122 CRISPR screens"/>
</dbReference>
<dbReference type="ChiTaRS" id="NIPSNAP3A">
    <property type="organism name" value="human"/>
</dbReference>
<dbReference type="GenomeRNAi" id="25934"/>
<dbReference type="Pharos" id="Q9UFN0">
    <property type="development level" value="Tdark"/>
</dbReference>
<dbReference type="PRO" id="PR:Q9UFN0"/>
<dbReference type="Proteomes" id="UP000005640">
    <property type="component" value="Chromosome 9"/>
</dbReference>
<dbReference type="RNAct" id="Q9UFN0">
    <property type="molecule type" value="protein"/>
</dbReference>
<dbReference type="Bgee" id="ENSG00000136783">
    <property type="expression patterns" value="Expressed in adrenal tissue and 184 other cell types or tissues"/>
</dbReference>
<dbReference type="GO" id="GO:0005829">
    <property type="term" value="C:cytosol"/>
    <property type="evidence" value="ECO:0007669"/>
    <property type="project" value="UniProtKB-SubCell"/>
</dbReference>
<dbReference type="GO" id="GO:0005739">
    <property type="term" value="C:mitochondrion"/>
    <property type="evidence" value="ECO:0006056"/>
    <property type="project" value="FlyBase"/>
</dbReference>
<dbReference type="GO" id="GO:0005634">
    <property type="term" value="C:nucleus"/>
    <property type="evidence" value="ECO:0007005"/>
    <property type="project" value="UniProtKB"/>
</dbReference>
<dbReference type="GO" id="GO:0000423">
    <property type="term" value="P:mitophagy"/>
    <property type="evidence" value="ECO:0007669"/>
    <property type="project" value="UniProtKB-ARBA"/>
</dbReference>
<dbReference type="FunFam" id="3.30.70.100:FF:000017">
    <property type="entry name" value="Protein NipSnap homolog 3A"/>
    <property type="match status" value="1"/>
</dbReference>
<dbReference type="FunFam" id="3.30.70.100:FF:000019">
    <property type="entry name" value="Protein NipSnap homolog 3A"/>
    <property type="match status" value="1"/>
</dbReference>
<dbReference type="Gene3D" id="3.30.70.100">
    <property type="match status" value="2"/>
</dbReference>
<dbReference type="InterPro" id="IPR011008">
    <property type="entry name" value="Dimeric_a/b-barrel"/>
</dbReference>
<dbReference type="InterPro" id="IPR012577">
    <property type="entry name" value="NIPSNAP"/>
</dbReference>
<dbReference type="InterPro" id="IPR051557">
    <property type="entry name" value="NipSnap_domain"/>
</dbReference>
<dbReference type="PANTHER" id="PTHR21017">
    <property type="entry name" value="NIPSNAP-RELATED"/>
    <property type="match status" value="1"/>
</dbReference>
<dbReference type="PANTHER" id="PTHR21017:SF23">
    <property type="entry name" value="PROTEIN NIPSNAP HOMOLOG 3A"/>
    <property type="match status" value="1"/>
</dbReference>
<dbReference type="Pfam" id="PF07978">
    <property type="entry name" value="NIPSNAP"/>
    <property type="match status" value="2"/>
</dbReference>
<dbReference type="SUPFAM" id="SSF54909">
    <property type="entry name" value="Dimeric alpha+beta barrel"/>
    <property type="match status" value="2"/>
</dbReference>
<evidence type="ECO:0000269" key="1">
    <source>
    </source>
</evidence>
<evidence type="ECO:0000269" key="2">
    <source>
    </source>
</evidence>
<evidence type="ECO:0000305" key="3"/>
<evidence type="ECO:0007744" key="4">
    <source>
    </source>
</evidence>
<organism>
    <name type="scientific">Homo sapiens</name>
    <name type="common">Human</name>
    <dbReference type="NCBI Taxonomy" id="9606"/>
    <lineage>
        <taxon>Eukaryota</taxon>
        <taxon>Metazoa</taxon>
        <taxon>Chordata</taxon>
        <taxon>Craniata</taxon>
        <taxon>Vertebrata</taxon>
        <taxon>Euteleostomi</taxon>
        <taxon>Mammalia</taxon>
        <taxon>Eutheria</taxon>
        <taxon>Euarchontoglires</taxon>
        <taxon>Primates</taxon>
        <taxon>Haplorrhini</taxon>
        <taxon>Catarrhini</taxon>
        <taxon>Hominidae</taxon>
        <taxon>Homo</taxon>
    </lineage>
</organism>
<name>NPS3A_HUMAN</name>
<proteinExistence type="evidence at protein level"/>
<reference key="1">
    <citation type="journal article" date="2004" name="Nat. Genet.">
        <title>Complete sequencing and characterization of 21,243 full-length human cDNAs.</title>
        <authorList>
            <person name="Ota T."/>
            <person name="Suzuki Y."/>
            <person name="Nishikawa T."/>
            <person name="Otsuki T."/>
            <person name="Sugiyama T."/>
            <person name="Irie R."/>
            <person name="Wakamatsu A."/>
            <person name="Hayashi K."/>
            <person name="Sato H."/>
            <person name="Nagai K."/>
            <person name="Kimura K."/>
            <person name="Makita H."/>
            <person name="Sekine M."/>
            <person name="Obayashi M."/>
            <person name="Nishi T."/>
            <person name="Shibahara T."/>
            <person name="Tanaka T."/>
            <person name="Ishii S."/>
            <person name="Yamamoto J."/>
            <person name="Saito K."/>
            <person name="Kawai Y."/>
            <person name="Isono Y."/>
            <person name="Nakamura Y."/>
            <person name="Nagahari K."/>
            <person name="Murakami K."/>
            <person name="Yasuda T."/>
            <person name="Iwayanagi T."/>
            <person name="Wagatsuma M."/>
            <person name="Shiratori A."/>
            <person name="Sudo H."/>
            <person name="Hosoiri T."/>
            <person name="Kaku Y."/>
            <person name="Kodaira H."/>
            <person name="Kondo H."/>
            <person name="Sugawara M."/>
            <person name="Takahashi M."/>
            <person name="Kanda K."/>
            <person name="Yokoi T."/>
            <person name="Furuya T."/>
            <person name="Kikkawa E."/>
            <person name="Omura Y."/>
            <person name="Abe K."/>
            <person name="Kamihara K."/>
            <person name="Katsuta N."/>
            <person name="Sato K."/>
            <person name="Tanikawa M."/>
            <person name="Yamazaki M."/>
            <person name="Ninomiya K."/>
            <person name="Ishibashi T."/>
            <person name="Yamashita H."/>
            <person name="Murakawa K."/>
            <person name="Fujimori K."/>
            <person name="Tanai H."/>
            <person name="Kimata M."/>
            <person name="Watanabe M."/>
            <person name="Hiraoka S."/>
            <person name="Chiba Y."/>
            <person name="Ishida S."/>
            <person name="Ono Y."/>
            <person name="Takiguchi S."/>
            <person name="Watanabe S."/>
            <person name="Yosida M."/>
            <person name="Hotuta T."/>
            <person name="Kusano J."/>
            <person name="Kanehori K."/>
            <person name="Takahashi-Fujii A."/>
            <person name="Hara H."/>
            <person name="Tanase T.-O."/>
            <person name="Nomura Y."/>
            <person name="Togiya S."/>
            <person name="Komai F."/>
            <person name="Hara R."/>
            <person name="Takeuchi K."/>
            <person name="Arita M."/>
            <person name="Imose N."/>
            <person name="Musashino K."/>
            <person name="Yuuki H."/>
            <person name="Oshima A."/>
            <person name="Sasaki N."/>
            <person name="Aotsuka S."/>
            <person name="Yoshikawa Y."/>
            <person name="Matsunawa H."/>
            <person name="Ichihara T."/>
            <person name="Shiohata N."/>
            <person name="Sano S."/>
            <person name="Moriya S."/>
            <person name="Momiyama H."/>
            <person name="Satoh N."/>
            <person name="Takami S."/>
            <person name="Terashima Y."/>
            <person name="Suzuki O."/>
            <person name="Nakagawa S."/>
            <person name="Senoh A."/>
            <person name="Mizoguchi H."/>
            <person name="Goto Y."/>
            <person name="Shimizu F."/>
            <person name="Wakebe H."/>
            <person name="Hishigaki H."/>
            <person name="Watanabe T."/>
            <person name="Sugiyama A."/>
            <person name="Takemoto M."/>
            <person name="Kawakami B."/>
            <person name="Yamazaki M."/>
            <person name="Watanabe K."/>
            <person name="Kumagai A."/>
            <person name="Itakura S."/>
            <person name="Fukuzumi Y."/>
            <person name="Fujimori Y."/>
            <person name="Komiyama M."/>
            <person name="Tashiro H."/>
            <person name="Tanigami A."/>
            <person name="Fujiwara T."/>
            <person name="Ono T."/>
            <person name="Yamada K."/>
            <person name="Fujii Y."/>
            <person name="Ozaki K."/>
            <person name="Hirao M."/>
            <person name="Ohmori Y."/>
            <person name="Kawabata A."/>
            <person name="Hikiji T."/>
            <person name="Kobatake N."/>
            <person name="Inagaki H."/>
            <person name="Ikema Y."/>
            <person name="Okamoto S."/>
            <person name="Okitani R."/>
            <person name="Kawakami T."/>
            <person name="Noguchi S."/>
            <person name="Itoh T."/>
            <person name="Shigeta K."/>
            <person name="Senba T."/>
            <person name="Matsumura K."/>
            <person name="Nakajima Y."/>
            <person name="Mizuno T."/>
            <person name="Morinaga M."/>
            <person name="Sasaki M."/>
            <person name="Togashi T."/>
            <person name="Oyama M."/>
            <person name="Hata H."/>
            <person name="Watanabe M."/>
            <person name="Komatsu T."/>
            <person name="Mizushima-Sugano J."/>
            <person name="Satoh T."/>
            <person name="Shirai Y."/>
            <person name="Takahashi Y."/>
            <person name="Nakagawa K."/>
            <person name="Okumura K."/>
            <person name="Nagase T."/>
            <person name="Nomura N."/>
            <person name="Kikuchi H."/>
            <person name="Masuho Y."/>
            <person name="Yamashita R."/>
            <person name="Nakai K."/>
            <person name="Yada T."/>
            <person name="Nakamura Y."/>
            <person name="Ohara O."/>
            <person name="Isogai T."/>
            <person name="Sugano S."/>
        </authorList>
    </citation>
    <scope>NUCLEOTIDE SEQUENCE [LARGE SCALE MRNA]</scope>
    <scope>VARIANT GLN-100</scope>
</reference>
<reference key="2">
    <citation type="journal article" date="2007" name="BMC Genomics">
        <title>The full-ORF clone resource of the German cDNA consortium.</title>
        <authorList>
            <person name="Bechtel S."/>
            <person name="Rosenfelder H."/>
            <person name="Duda A."/>
            <person name="Schmidt C.P."/>
            <person name="Ernst U."/>
            <person name="Wellenreuther R."/>
            <person name="Mehrle A."/>
            <person name="Schuster C."/>
            <person name="Bahr A."/>
            <person name="Bloecker H."/>
            <person name="Heubner D."/>
            <person name="Hoerlein A."/>
            <person name="Michel G."/>
            <person name="Wedler H."/>
            <person name="Koehrer K."/>
            <person name="Ottenwaelder B."/>
            <person name="Poustka A."/>
            <person name="Wiemann S."/>
            <person name="Schupp I."/>
        </authorList>
    </citation>
    <scope>NUCLEOTIDE SEQUENCE [LARGE SCALE MRNA]</scope>
    <source>
        <tissue>Brain</tissue>
    </source>
</reference>
<reference key="3">
    <citation type="submission" date="1999-05" db="EMBL/GenBank/DDBJ databases">
        <title>Human partial CDS from CD34+ stem cells.</title>
        <authorList>
            <person name="Ye M."/>
            <person name="Zhang Q.-H."/>
            <person name="Zhou J."/>
            <person name="Shen Y."/>
            <person name="Wu X.-Y."/>
            <person name="Guan Z.Q."/>
            <person name="Wang L."/>
            <person name="Fan H.-Y."/>
            <person name="Mao Y.-F."/>
            <person name="Dai M."/>
            <person name="Huang Q.-H."/>
            <person name="Chen S.-J."/>
            <person name="Chen Z."/>
        </authorList>
    </citation>
    <scope>NUCLEOTIDE SEQUENCE [LARGE SCALE MRNA]</scope>
    <source>
        <tissue>Umbilical cord blood</tissue>
    </source>
</reference>
<reference key="4">
    <citation type="journal article" date="2004" name="Nature">
        <title>DNA sequence and analysis of human chromosome 9.</title>
        <authorList>
            <person name="Humphray S.J."/>
            <person name="Oliver K."/>
            <person name="Hunt A.R."/>
            <person name="Plumb R.W."/>
            <person name="Loveland J.E."/>
            <person name="Howe K.L."/>
            <person name="Andrews T.D."/>
            <person name="Searle S."/>
            <person name="Hunt S.E."/>
            <person name="Scott C.E."/>
            <person name="Jones M.C."/>
            <person name="Ainscough R."/>
            <person name="Almeida J.P."/>
            <person name="Ambrose K.D."/>
            <person name="Ashwell R.I.S."/>
            <person name="Babbage A.K."/>
            <person name="Babbage S."/>
            <person name="Bagguley C.L."/>
            <person name="Bailey J."/>
            <person name="Banerjee R."/>
            <person name="Barker D.J."/>
            <person name="Barlow K.F."/>
            <person name="Bates K."/>
            <person name="Beasley H."/>
            <person name="Beasley O."/>
            <person name="Bird C.P."/>
            <person name="Bray-Allen S."/>
            <person name="Brown A.J."/>
            <person name="Brown J.Y."/>
            <person name="Burford D."/>
            <person name="Burrill W."/>
            <person name="Burton J."/>
            <person name="Carder C."/>
            <person name="Carter N.P."/>
            <person name="Chapman J.C."/>
            <person name="Chen Y."/>
            <person name="Clarke G."/>
            <person name="Clark S.Y."/>
            <person name="Clee C.M."/>
            <person name="Clegg S."/>
            <person name="Collier R.E."/>
            <person name="Corby N."/>
            <person name="Crosier M."/>
            <person name="Cummings A.T."/>
            <person name="Davies J."/>
            <person name="Dhami P."/>
            <person name="Dunn M."/>
            <person name="Dutta I."/>
            <person name="Dyer L.W."/>
            <person name="Earthrowl M.E."/>
            <person name="Faulkner L."/>
            <person name="Fleming C.J."/>
            <person name="Frankish A."/>
            <person name="Frankland J.A."/>
            <person name="French L."/>
            <person name="Fricker D.G."/>
            <person name="Garner P."/>
            <person name="Garnett J."/>
            <person name="Ghori J."/>
            <person name="Gilbert J.G.R."/>
            <person name="Glison C."/>
            <person name="Grafham D.V."/>
            <person name="Gribble S."/>
            <person name="Griffiths C."/>
            <person name="Griffiths-Jones S."/>
            <person name="Grocock R."/>
            <person name="Guy J."/>
            <person name="Hall R.E."/>
            <person name="Hammond S."/>
            <person name="Harley J.L."/>
            <person name="Harrison E.S.I."/>
            <person name="Hart E.A."/>
            <person name="Heath P.D."/>
            <person name="Henderson C.D."/>
            <person name="Hopkins B.L."/>
            <person name="Howard P.J."/>
            <person name="Howden P.J."/>
            <person name="Huckle E."/>
            <person name="Johnson C."/>
            <person name="Johnson D."/>
            <person name="Joy A.A."/>
            <person name="Kay M."/>
            <person name="Keenan S."/>
            <person name="Kershaw J.K."/>
            <person name="Kimberley A.M."/>
            <person name="King A."/>
            <person name="Knights A."/>
            <person name="Laird G.K."/>
            <person name="Langford C."/>
            <person name="Lawlor S."/>
            <person name="Leongamornlert D.A."/>
            <person name="Leversha M."/>
            <person name="Lloyd C."/>
            <person name="Lloyd D.M."/>
            <person name="Lovell J."/>
            <person name="Martin S."/>
            <person name="Mashreghi-Mohammadi M."/>
            <person name="Matthews L."/>
            <person name="McLaren S."/>
            <person name="McLay K.E."/>
            <person name="McMurray A."/>
            <person name="Milne S."/>
            <person name="Nickerson T."/>
            <person name="Nisbett J."/>
            <person name="Nordsiek G."/>
            <person name="Pearce A.V."/>
            <person name="Peck A.I."/>
            <person name="Porter K.M."/>
            <person name="Pandian R."/>
            <person name="Pelan S."/>
            <person name="Phillimore B."/>
            <person name="Povey S."/>
            <person name="Ramsey Y."/>
            <person name="Rand V."/>
            <person name="Scharfe M."/>
            <person name="Sehra H.K."/>
            <person name="Shownkeen R."/>
            <person name="Sims S.K."/>
            <person name="Skuce C.D."/>
            <person name="Smith M."/>
            <person name="Steward C.A."/>
            <person name="Swarbreck D."/>
            <person name="Sycamore N."/>
            <person name="Tester J."/>
            <person name="Thorpe A."/>
            <person name="Tracey A."/>
            <person name="Tromans A."/>
            <person name="Thomas D.W."/>
            <person name="Wall M."/>
            <person name="Wallis J.M."/>
            <person name="West A.P."/>
            <person name="Whitehead S.L."/>
            <person name="Willey D.L."/>
            <person name="Williams S.A."/>
            <person name="Wilming L."/>
            <person name="Wray P.W."/>
            <person name="Young L."/>
            <person name="Ashurst J.L."/>
            <person name="Coulson A."/>
            <person name="Blocker H."/>
            <person name="Durbin R.M."/>
            <person name="Sulston J.E."/>
            <person name="Hubbard T."/>
            <person name="Jackson M.J."/>
            <person name="Bentley D.R."/>
            <person name="Beck S."/>
            <person name="Rogers J."/>
            <person name="Dunham I."/>
        </authorList>
    </citation>
    <scope>NUCLEOTIDE SEQUENCE [LARGE SCALE GENOMIC DNA]</scope>
</reference>
<reference key="5">
    <citation type="submission" date="2005-07" db="EMBL/GenBank/DDBJ databases">
        <authorList>
            <person name="Mural R.J."/>
            <person name="Istrail S."/>
            <person name="Sutton G.G."/>
            <person name="Florea L."/>
            <person name="Halpern A.L."/>
            <person name="Mobarry C.M."/>
            <person name="Lippert R."/>
            <person name="Walenz B."/>
            <person name="Shatkay H."/>
            <person name="Dew I."/>
            <person name="Miller J.R."/>
            <person name="Flanigan M.J."/>
            <person name="Edwards N.J."/>
            <person name="Bolanos R."/>
            <person name="Fasulo D."/>
            <person name="Halldorsson B.V."/>
            <person name="Hannenhalli S."/>
            <person name="Turner R."/>
            <person name="Yooseph S."/>
            <person name="Lu F."/>
            <person name="Nusskern D.R."/>
            <person name="Shue B.C."/>
            <person name="Zheng X.H."/>
            <person name="Zhong F."/>
            <person name="Delcher A.L."/>
            <person name="Huson D.H."/>
            <person name="Kravitz S.A."/>
            <person name="Mouchard L."/>
            <person name="Reinert K."/>
            <person name="Remington K.A."/>
            <person name="Clark A.G."/>
            <person name="Waterman M.S."/>
            <person name="Eichler E.E."/>
            <person name="Adams M.D."/>
            <person name="Hunkapiller M.W."/>
            <person name="Myers E.W."/>
            <person name="Venter J.C."/>
        </authorList>
    </citation>
    <scope>NUCLEOTIDE SEQUENCE [LARGE SCALE GENOMIC DNA]</scope>
</reference>
<reference key="6">
    <citation type="journal article" date="2004" name="Genome Res.">
        <title>The status, quality, and expansion of the NIH full-length cDNA project: the Mammalian Gene Collection (MGC).</title>
        <authorList>
            <consortium name="The MGC Project Team"/>
        </authorList>
    </citation>
    <scope>NUCLEOTIDE SEQUENCE [LARGE SCALE MRNA]</scope>
    <source>
        <tissue>Bone marrow</tissue>
    </source>
</reference>
<reference key="7">
    <citation type="journal article" date="2002" name="Cell. Microbiol.">
        <title>Identification of a NIPSNAP homologue as host cell target for Salmonella virulence protein SpiC.</title>
        <authorList>
            <person name="Lee A.H."/>
            <person name="Zareei M.P."/>
            <person name="Daefler S."/>
        </authorList>
    </citation>
    <scope>SUBCELLULAR LOCATION</scope>
    <scope>TISSUE SPECIFICITY</scope>
    <scope>INTERACTION WITH SALMONELLA SPIC</scope>
</reference>
<reference key="8">
    <citation type="journal article" date="2009" name="Science">
        <title>Lysine acetylation targets protein complexes and co-regulates major cellular functions.</title>
        <authorList>
            <person name="Choudhary C."/>
            <person name="Kumar C."/>
            <person name="Gnad F."/>
            <person name="Nielsen M.L."/>
            <person name="Rehman M."/>
            <person name="Walther T.C."/>
            <person name="Olsen J.V."/>
            <person name="Mann M."/>
        </authorList>
    </citation>
    <scope>ACETYLATION [LARGE SCALE ANALYSIS] AT LYS-48 AND LYS-166</scope>
    <scope>IDENTIFICATION BY MASS SPECTROMETRY [LARGE SCALE ANALYSIS]</scope>
</reference>
<reference key="9">
    <citation type="journal article" date="2011" name="BMC Syst. Biol.">
        <title>Initial characterization of the human central proteome.</title>
        <authorList>
            <person name="Burkard T.R."/>
            <person name="Planyavsky M."/>
            <person name="Kaupe I."/>
            <person name="Breitwieser F.P."/>
            <person name="Buerckstuemmer T."/>
            <person name="Bennett K.L."/>
            <person name="Superti-Furga G."/>
            <person name="Colinge J."/>
        </authorList>
    </citation>
    <scope>IDENTIFICATION BY MASS SPECTROMETRY [LARGE SCALE ANALYSIS]</scope>
</reference>
<reference key="10">
    <citation type="journal article" date="2014" name="J. Proteomics">
        <title>An enzyme assisted RP-RPLC approach for in-depth analysis of human liver phosphoproteome.</title>
        <authorList>
            <person name="Bian Y."/>
            <person name="Song C."/>
            <person name="Cheng K."/>
            <person name="Dong M."/>
            <person name="Wang F."/>
            <person name="Huang J."/>
            <person name="Sun D."/>
            <person name="Wang L."/>
            <person name="Ye M."/>
            <person name="Zou H."/>
        </authorList>
    </citation>
    <scope>IDENTIFICATION BY MASS SPECTROMETRY [LARGE SCALE ANALYSIS]</scope>
    <source>
        <tissue>Liver</tissue>
    </source>
</reference>
<reference key="11">
    <citation type="journal article" date="2015" name="Proteomics">
        <title>N-terminome analysis of the human mitochondrial proteome.</title>
        <authorList>
            <person name="Vaca Jacome A.S."/>
            <person name="Rabilloud T."/>
            <person name="Schaeffer-Reiss C."/>
            <person name="Rompais M."/>
            <person name="Ayoub D."/>
            <person name="Lane L."/>
            <person name="Bairoch A."/>
            <person name="Van Dorsselaer A."/>
            <person name="Carapito C."/>
        </authorList>
    </citation>
    <scope>IDENTIFICATION BY MASS SPECTROMETRY [LARGE SCALE ANALYSIS]</scope>
</reference>
<comment type="subunit">
    <text evidence="1">Interacts with the Salmonella typhimurium virulence protein spiC.</text>
</comment>
<comment type="interaction">
    <interactant intactId="EBI-716291">
        <id>Q9UFN0</id>
    </interactant>
    <interactant intactId="EBI-739624">
        <id>Q8NHQ1</id>
        <label>CEP70</label>
    </interactant>
    <organismsDiffer>false</organismsDiffer>
    <experiments>3</experiments>
</comment>
<comment type="interaction">
    <interactant intactId="EBI-716291">
        <id>Q9UFN0</id>
    </interactant>
    <interactant intactId="EBI-2337775">
        <id>Q9H3D4</id>
        <label>TP63</label>
    </interactant>
    <organismsDiffer>false</organismsDiffer>
    <experiments>2</experiments>
</comment>
<comment type="subcellular location">
    <subcellularLocation>
        <location evidence="1">Cytoplasm</location>
        <location evidence="1">Cytosol</location>
    </subcellularLocation>
    <text>May be part of some vesicular structure distinct from lysosomal vesicles.</text>
</comment>
<comment type="tissue specificity">
    <text evidence="1">Ubiquitous. Highly expressed in liver, kidney and muscle. Expressed at intermediate level in brain, heart, colon, thymus, kidney, small intestine, placenta, lung, leukocytes and spleen.</text>
</comment>
<comment type="similarity">
    <text evidence="3">Belongs to the NipSnap family.</text>
</comment>
<comment type="sequence caution" evidence="3">
    <conflict type="erroneous initiation">
        <sequence resource="EMBL-CDS" id="AAF28977"/>
    </conflict>
</comment>
<accession>Q9UFN0</accession>
<accession>A6NM55</accession>
<accession>Q5VX32</accession>
<accession>Q9BRV7</accession>
<accession>Q9H843</accession>
<accession>Q9P083</accession>
<feature type="chain" id="PRO_0000221152" description="Protein NipSnap homolog 3A">
    <location>
        <begin position="1"/>
        <end position="247"/>
    </location>
</feature>
<feature type="modified residue" description="N6-acetyllysine" evidence="4">
    <location>
        <position position="48"/>
    </location>
</feature>
<feature type="modified residue" description="N6-acetyllysine" evidence="4">
    <location>
        <position position="166"/>
    </location>
</feature>
<feature type="sequence variant" id="VAR_020442" description="In dbSNP:rs2274870." evidence="2">
    <original>R</original>
    <variation>Q</variation>
    <location>
        <position position="100"/>
    </location>
</feature>
<feature type="sequence conflict" description="In Ref. 3; AAF28977." evidence="3" ref="3">
    <original>E</original>
    <variation>G</variation>
    <location>
        <position position="108"/>
    </location>
</feature>
<feature type="sequence conflict" description="In Ref. 3; AAF28977." evidence="3" ref="3">
    <original>L</original>
    <variation>S</variation>
    <location>
        <position position="118"/>
    </location>
</feature>
<sequence length="247" mass="28467">MLVLRSALTRALASRTLAPQMCSSFATGPRQYDGIFYEFRSYYLKPSKMNEFLENFEKNAHLRTAHSELVGYWSVEFGGRMNTVFHIWKYDNFAHRTEVRKALAKDKEWQEQFLIPNLALIDKQESEITYLVPWCKLEKPPKEGVYELATFQMKPGGPALWGDAFKRAVHAHVNLGYTKLVGVFHTEYGALNRVHVLWWNESADSRAAGRHKSHEDPRVVAAVRESVNYLVSQQNMLLIPTSFSPLK</sequence>